<proteinExistence type="inferred from homology"/>
<protein>
    <recommendedName>
        <fullName evidence="1">Large ribosomal subunit protein uL30</fullName>
    </recommendedName>
    <alternativeName>
        <fullName evidence="2">50S ribosomal protein L30</fullName>
    </alternativeName>
</protein>
<gene>
    <name evidence="1" type="primary">rpmD</name>
    <name type="ordered locus">BB0049</name>
</gene>
<evidence type="ECO:0000255" key="1">
    <source>
        <dbReference type="HAMAP-Rule" id="MF_01371"/>
    </source>
</evidence>
<evidence type="ECO:0000305" key="2"/>
<name>RL30_BORBR</name>
<feature type="chain" id="PRO_0000273750" description="Large ribosomal subunit protein uL30">
    <location>
        <begin position="1"/>
        <end position="61"/>
    </location>
</feature>
<reference key="1">
    <citation type="journal article" date="2003" name="Nat. Genet.">
        <title>Comparative analysis of the genome sequences of Bordetella pertussis, Bordetella parapertussis and Bordetella bronchiseptica.</title>
        <authorList>
            <person name="Parkhill J."/>
            <person name="Sebaihia M."/>
            <person name="Preston A."/>
            <person name="Murphy L.D."/>
            <person name="Thomson N.R."/>
            <person name="Harris D.E."/>
            <person name="Holden M.T.G."/>
            <person name="Churcher C.M."/>
            <person name="Bentley S.D."/>
            <person name="Mungall K.L."/>
            <person name="Cerdeno-Tarraga A.-M."/>
            <person name="Temple L."/>
            <person name="James K.D."/>
            <person name="Harris B."/>
            <person name="Quail M.A."/>
            <person name="Achtman M."/>
            <person name="Atkin R."/>
            <person name="Baker S."/>
            <person name="Basham D."/>
            <person name="Bason N."/>
            <person name="Cherevach I."/>
            <person name="Chillingworth T."/>
            <person name="Collins M."/>
            <person name="Cronin A."/>
            <person name="Davis P."/>
            <person name="Doggett J."/>
            <person name="Feltwell T."/>
            <person name="Goble A."/>
            <person name="Hamlin N."/>
            <person name="Hauser H."/>
            <person name="Holroyd S."/>
            <person name="Jagels K."/>
            <person name="Leather S."/>
            <person name="Moule S."/>
            <person name="Norberczak H."/>
            <person name="O'Neil S."/>
            <person name="Ormond D."/>
            <person name="Price C."/>
            <person name="Rabbinowitsch E."/>
            <person name="Rutter S."/>
            <person name="Sanders M."/>
            <person name="Saunders D."/>
            <person name="Seeger K."/>
            <person name="Sharp S."/>
            <person name="Simmonds M."/>
            <person name="Skelton J."/>
            <person name="Squares R."/>
            <person name="Squares S."/>
            <person name="Stevens K."/>
            <person name="Unwin L."/>
            <person name="Whitehead S."/>
            <person name="Barrell B.G."/>
            <person name="Maskell D.J."/>
        </authorList>
    </citation>
    <scope>NUCLEOTIDE SEQUENCE [LARGE SCALE GENOMIC DNA]</scope>
    <source>
        <strain>ATCC BAA-588 / NCTC 13252 / RB50</strain>
    </source>
</reference>
<organism>
    <name type="scientific">Bordetella bronchiseptica (strain ATCC BAA-588 / NCTC 13252 / RB50)</name>
    <name type="common">Alcaligenes bronchisepticus</name>
    <dbReference type="NCBI Taxonomy" id="257310"/>
    <lineage>
        <taxon>Bacteria</taxon>
        <taxon>Pseudomonadati</taxon>
        <taxon>Pseudomonadota</taxon>
        <taxon>Betaproteobacteria</taxon>
        <taxon>Burkholderiales</taxon>
        <taxon>Alcaligenaceae</taxon>
        <taxon>Bordetella</taxon>
    </lineage>
</organism>
<comment type="subunit">
    <text evidence="1">Part of the 50S ribosomal subunit.</text>
</comment>
<comment type="similarity">
    <text evidence="1">Belongs to the universal ribosomal protein uL30 family.</text>
</comment>
<dbReference type="EMBL" id="BX640437">
    <property type="protein sequence ID" value="CAE30551.1"/>
    <property type="molecule type" value="Genomic_DNA"/>
</dbReference>
<dbReference type="RefSeq" id="WP_003806924.1">
    <property type="nucleotide sequence ID" value="NC_002927.3"/>
</dbReference>
<dbReference type="SMR" id="Q7WRA5"/>
<dbReference type="GeneID" id="93206279"/>
<dbReference type="KEGG" id="bbr:BB0049"/>
<dbReference type="eggNOG" id="COG1841">
    <property type="taxonomic scope" value="Bacteria"/>
</dbReference>
<dbReference type="HOGENOM" id="CLU_131047_2_1_4"/>
<dbReference type="Proteomes" id="UP000001027">
    <property type="component" value="Chromosome"/>
</dbReference>
<dbReference type="GO" id="GO:0022625">
    <property type="term" value="C:cytosolic large ribosomal subunit"/>
    <property type="evidence" value="ECO:0007669"/>
    <property type="project" value="TreeGrafter"/>
</dbReference>
<dbReference type="GO" id="GO:0003735">
    <property type="term" value="F:structural constituent of ribosome"/>
    <property type="evidence" value="ECO:0007669"/>
    <property type="project" value="InterPro"/>
</dbReference>
<dbReference type="GO" id="GO:0006412">
    <property type="term" value="P:translation"/>
    <property type="evidence" value="ECO:0007669"/>
    <property type="project" value="UniProtKB-UniRule"/>
</dbReference>
<dbReference type="CDD" id="cd01658">
    <property type="entry name" value="Ribosomal_L30"/>
    <property type="match status" value="1"/>
</dbReference>
<dbReference type="FunFam" id="3.30.1390.20:FF:000001">
    <property type="entry name" value="50S ribosomal protein L30"/>
    <property type="match status" value="1"/>
</dbReference>
<dbReference type="Gene3D" id="3.30.1390.20">
    <property type="entry name" value="Ribosomal protein L30, ferredoxin-like fold domain"/>
    <property type="match status" value="1"/>
</dbReference>
<dbReference type="HAMAP" id="MF_01371_B">
    <property type="entry name" value="Ribosomal_uL30_B"/>
    <property type="match status" value="1"/>
</dbReference>
<dbReference type="InterPro" id="IPR036919">
    <property type="entry name" value="Ribo_uL30_ferredoxin-like_sf"/>
</dbReference>
<dbReference type="InterPro" id="IPR005996">
    <property type="entry name" value="Ribosomal_uL30_bac-type"/>
</dbReference>
<dbReference type="InterPro" id="IPR018038">
    <property type="entry name" value="Ribosomal_uL30_CS"/>
</dbReference>
<dbReference type="InterPro" id="IPR016082">
    <property type="entry name" value="Ribosomal_uL30_ferredoxin-like"/>
</dbReference>
<dbReference type="NCBIfam" id="TIGR01308">
    <property type="entry name" value="rpmD_bact"/>
    <property type="match status" value="1"/>
</dbReference>
<dbReference type="PANTHER" id="PTHR15892:SF2">
    <property type="entry name" value="LARGE RIBOSOMAL SUBUNIT PROTEIN UL30M"/>
    <property type="match status" value="1"/>
</dbReference>
<dbReference type="PANTHER" id="PTHR15892">
    <property type="entry name" value="MITOCHONDRIAL RIBOSOMAL PROTEIN L30"/>
    <property type="match status" value="1"/>
</dbReference>
<dbReference type="Pfam" id="PF00327">
    <property type="entry name" value="Ribosomal_L30"/>
    <property type="match status" value="1"/>
</dbReference>
<dbReference type="PIRSF" id="PIRSF002211">
    <property type="entry name" value="Ribosomal_L30_bac-type"/>
    <property type="match status" value="1"/>
</dbReference>
<dbReference type="SUPFAM" id="SSF55129">
    <property type="entry name" value="Ribosomal protein L30p/L7e"/>
    <property type="match status" value="1"/>
</dbReference>
<dbReference type="PROSITE" id="PS00634">
    <property type="entry name" value="RIBOSOMAL_L30"/>
    <property type="match status" value="1"/>
</dbReference>
<sequence>MAQKQIKVTLVRSVIGTKQSHRDTIRGLGLRRINSSRVLVDTPEVRGMIHKVGYLVSVSEA</sequence>
<keyword id="KW-0687">Ribonucleoprotein</keyword>
<keyword id="KW-0689">Ribosomal protein</keyword>
<accession>Q7WRA5</accession>